<proteinExistence type="evidence at transcript level"/>
<sequence length="624" mass="68613">MTNPKEKTPMCLVNELARFNRIQPQYKLLDERGPAHSKLFTVQLTLGEQTWQAESTSIKKAQHAAASLALSETTLPKPAARQTKNHMNNNPEAAELHGNTFTSSRHSAKGSITPTVELNGLAMRRGEPAIYRSLDPKPLPNQRANYNYRGMYHQRYLCPMLKTFYVQLTVGNSEFYGEGKTRQAARHNAALKALHALRNEPIPERSSLNGEANRGPEEDKDANKSEISLVFEISLKRNLSLSFEVIKESGPPHMKSFVTRVTVGEFTAEGEGNSKKLAKRRAAAAVLQELRKLPPLPVIEKPRIYIKRRPKNIIKASPEYGQGMNPISRLAQIQQAKKEKEPEYVLLSERGIQRRREFVMQVKVGEETATGTGPNKKTAKRNAAEAMLLQLGYKASSPVVEKTGKRGENPDWDEQNSGIADQTSTPKGILHLSPDVYQEMEASRNKTVPAPAISYLSSKEMNQASSSFFSTSVSQSCTAAIARELLTNGTSPTAEAIGFTGKNLMCHSSTVQPSKQLEYLAGIQGLQVNYSDRQSGNDFLTCLTLSPVQMTFHGIGSSLEASHDQAALSALKQFSEQGLDSVDGSLMAENGPFEQAKLRGEKADNKQANSGTIAQDCKDSKAVV</sequence>
<comment type="function">
    <text evidence="1">RNA-binding protein required for the microtubule-dependent transport of RNAs within polarized cell types.</text>
</comment>
<comment type="domain">
    <text evidence="1">The DRBM 3 domain appears to be the major RNA-binding determinant.</text>
</comment>
<name>STAU2_XENTR</name>
<dbReference type="EMBL" id="BC088555">
    <property type="protein sequence ID" value="AAH88555.1"/>
    <property type="molecule type" value="mRNA"/>
</dbReference>
<dbReference type="RefSeq" id="NP_001011376.2">
    <property type="nucleotide sequence ID" value="NM_001011376.2"/>
</dbReference>
<dbReference type="SMR" id="Q5M7M7"/>
<dbReference type="FunCoup" id="Q5M7M7">
    <property type="interactions" value="1722"/>
</dbReference>
<dbReference type="STRING" id="8364.ENSXETP00000054119"/>
<dbReference type="PaxDb" id="8364-ENSXETP00000025855"/>
<dbReference type="DNASU" id="496843"/>
<dbReference type="GeneID" id="496843"/>
<dbReference type="KEGG" id="xtr:496843"/>
<dbReference type="CTD" id="27067"/>
<dbReference type="eggNOG" id="KOG3732">
    <property type="taxonomic scope" value="Eukaryota"/>
</dbReference>
<dbReference type="InParanoid" id="Q5M7M7"/>
<dbReference type="OrthoDB" id="10037267at2759"/>
<dbReference type="Proteomes" id="UP000008143">
    <property type="component" value="Chromosome 6"/>
</dbReference>
<dbReference type="GO" id="GO:0005874">
    <property type="term" value="C:microtubule"/>
    <property type="evidence" value="ECO:0007669"/>
    <property type="project" value="UniProtKB-KW"/>
</dbReference>
<dbReference type="GO" id="GO:0003723">
    <property type="term" value="F:RNA binding"/>
    <property type="evidence" value="ECO:0007669"/>
    <property type="project" value="UniProtKB-KW"/>
</dbReference>
<dbReference type="CDD" id="cd19880">
    <property type="entry name" value="DSRM_STAU2_rpt1"/>
    <property type="match status" value="1"/>
</dbReference>
<dbReference type="CDD" id="cd19882">
    <property type="entry name" value="DSRM_STAU2_rpt2"/>
    <property type="match status" value="1"/>
</dbReference>
<dbReference type="CDD" id="cd19884">
    <property type="entry name" value="DSRM_STAU2_rpt3"/>
    <property type="match status" value="1"/>
</dbReference>
<dbReference type="CDD" id="cd19886">
    <property type="entry name" value="DSRM_STAU2_rpt4"/>
    <property type="match status" value="1"/>
</dbReference>
<dbReference type="CDD" id="cd19888">
    <property type="entry name" value="DSRM_STAU2_rpt5"/>
    <property type="match status" value="1"/>
</dbReference>
<dbReference type="FunFam" id="3.30.160.20:FF:000007">
    <property type="entry name" value="Double-stranded RNA-binding protein Staufen homolog 1"/>
    <property type="match status" value="1"/>
</dbReference>
<dbReference type="FunFam" id="3.30.160.20:FF:000024">
    <property type="entry name" value="double-stranded RNA-binding protein Staufen homolog 1 isoform X1"/>
    <property type="match status" value="1"/>
</dbReference>
<dbReference type="FunFam" id="3.30.160.20:FF:000013">
    <property type="entry name" value="double-stranded RNA-binding protein Staufen homolog 2 isoform X3"/>
    <property type="match status" value="1"/>
</dbReference>
<dbReference type="Gene3D" id="3.30.160.20">
    <property type="match status" value="5"/>
</dbReference>
<dbReference type="Gene3D" id="6.10.250.1360">
    <property type="match status" value="1"/>
</dbReference>
<dbReference type="InterPro" id="IPR051740">
    <property type="entry name" value="DRBM-containing_protein"/>
</dbReference>
<dbReference type="InterPro" id="IPR014720">
    <property type="entry name" value="dsRBD_dom"/>
</dbReference>
<dbReference type="InterPro" id="IPR044476">
    <property type="entry name" value="STAU2_DSRM_1"/>
</dbReference>
<dbReference type="InterPro" id="IPR044464">
    <property type="entry name" value="STAU2_DSRM_2"/>
</dbReference>
<dbReference type="InterPro" id="IPR044473">
    <property type="entry name" value="STAU2_DSRM_3"/>
</dbReference>
<dbReference type="InterPro" id="IPR044474">
    <property type="entry name" value="STAU2_DSRM_4"/>
</dbReference>
<dbReference type="InterPro" id="IPR032478">
    <property type="entry name" value="Staufen_C"/>
</dbReference>
<dbReference type="PANTHER" id="PTHR46054:SF1">
    <property type="entry name" value="DOUBLE-STRANDED RNA-BINDING PROTEIN STAUFEN HOMOLOG 2"/>
    <property type="match status" value="1"/>
</dbReference>
<dbReference type="PANTHER" id="PTHR46054">
    <property type="entry name" value="MATERNAL EFFECT PROTEIN STAUFEN"/>
    <property type="match status" value="1"/>
</dbReference>
<dbReference type="Pfam" id="PF00035">
    <property type="entry name" value="dsrm"/>
    <property type="match status" value="4"/>
</dbReference>
<dbReference type="Pfam" id="PF16482">
    <property type="entry name" value="Staufen_C"/>
    <property type="match status" value="1"/>
</dbReference>
<dbReference type="SMART" id="SM00358">
    <property type="entry name" value="DSRM"/>
    <property type="match status" value="5"/>
</dbReference>
<dbReference type="SUPFAM" id="SSF54768">
    <property type="entry name" value="dsRNA-binding domain-like"/>
    <property type="match status" value="4"/>
</dbReference>
<dbReference type="PROSITE" id="PS50137">
    <property type="entry name" value="DS_RBD"/>
    <property type="match status" value="4"/>
</dbReference>
<gene>
    <name type="primary">stau2</name>
</gene>
<organism>
    <name type="scientific">Xenopus tropicalis</name>
    <name type="common">Western clawed frog</name>
    <name type="synonym">Silurana tropicalis</name>
    <dbReference type="NCBI Taxonomy" id="8364"/>
    <lineage>
        <taxon>Eukaryota</taxon>
        <taxon>Metazoa</taxon>
        <taxon>Chordata</taxon>
        <taxon>Craniata</taxon>
        <taxon>Vertebrata</taxon>
        <taxon>Euteleostomi</taxon>
        <taxon>Amphibia</taxon>
        <taxon>Batrachia</taxon>
        <taxon>Anura</taxon>
        <taxon>Pipoidea</taxon>
        <taxon>Pipidae</taxon>
        <taxon>Xenopodinae</taxon>
        <taxon>Xenopus</taxon>
        <taxon>Silurana</taxon>
    </lineage>
</organism>
<feature type="chain" id="PRO_0000072249" description="Double-stranded RNA-binding protein Staufen homolog 2">
    <location>
        <begin position="1"/>
        <end position="624"/>
    </location>
</feature>
<feature type="domain" description="DRBM 1" evidence="2">
    <location>
        <begin position="55"/>
        <end position="122"/>
    </location>
</feature>
<feature type="domain" description="DRBM 2" evidence="2">
    <location>
        <begin position="142"/>
        <end position="228"/>
    </location>
</feature>
<feature type="domain" description="DRBM 3" evidence="2">
    <location>
        <begin position="254"/>
        <end position="321"/>
    </location>
</feature>
<feature type="domain" description="DRBM 4" evidence="2">
    <location>
        <begin position="354"/>
        <end position="422"/>
    </location>
</feature>
<feature type="domain" description="DRBM 5" evidence="2">
    <location>
        <begin position="540"/>
        <end position="604"/>
    </location>
</feature>
<feature type="region of interest" description="Disordered" evidence="3">
    <location>
        <begin position="197"/>
        <end position="223"/>
    </location>
</feature>
<feature type="region of interest" description="Disordered" evidence="3">
    <location>
        <begin position="401"/>
        <end position="428"/>
    </location>
</feature>
<feature type="region of interest" description="Disordered" evidence="3">
    <location>
        <begin position="592"/>
        <end position="624"/>
    </location>
</feature>
<feature type="compositionally biased region" description="Basic and acidic residues" evidence="3">
    <location>
        <begin position="214"/>
        <end position="223"/>
    </location>
</feature>
<feature type="compositionally biased region" description="Polar residues" evidence="3">
    <location>
        <begin position="415"/>
        <end position="426"/>
    </location>
</feature>
<feature type="compositionally biased region" description="Basic and acidic residues" evidence="3">
    <location>
        <begin position="596"/>
        <end position="605"/>
    </location>
</feature>
<evidence type="ECO:0000250" key="1"/>
<evidence type="ECO:0000255" key="2">
    <source>
        <dbReference type="PROSITE-ProRule" id="PRU00266"/>
    </source>
</evidence>
<evidence type="ECO:0000256" key="3">
    <source>
        <dbReference type="SAM" id="MobiDB-lite"/>
    </source>
</evidence>
<accession>Q5M7M7</accession>
<protein>
    <recommendedName>
        <fullName>Double-stranded RNA-binding protein Staufen homolog 2</fullName>
    </recommendedName>
</protein>
<reference key="1">
    <citation type="submission" date="2004-12" db="EMBL/GenBank/DDBJ databases">
        <authorList>
            <consortium name="NIH - Xenopus Gene Collection (XGC) project"/>
        </authorList>
    </citation>
    <scope>NUCLEOTIDE SEQUENCE [LARGE SCALE MRNA]</scope>
    <source>
        <tissue>Embryo</tissue>
    </source>
</reference>
<keyword id="KW-0493">Microtubule</keyword>
<keyword id="KW-1185">Reference proteome</keyword>
<keyword id="KW-0677">Repeat</keyword>
<keyword id="KW-0694">RNA-binding</keyword>
<keyword id="KW-0813">Transport</keyword>